<name>PHNX_SALPC</name>
<comment type="function">
    <text evidence="1">Involved in phosphonate degradation.</text>
</comment>
<comment type="catalytic activity">
    <reaction evidence="1">
        <text>phosphonoacetaldehyde + H2O = acetaldehyde + phosphate + H(+)</text>
        <dbReference type="Rhea" id="RHEA:18905"/>
        <dbReference type="ChEBI" id="CHEBI:15343"/>
        <dbReference type="ChEBI" id="CHEBI:15377"/>
        <dbReference type="ChEBI" id="CHEBI:15378"/>
        <dbReference type="ChEBI" id="CHEBI:43474"/>
        <dbReference type="ChEBI" id="CHEBI:58383"/>
        <dbReference type="EC" id="3.11.1.1"/>
    </reaction>
</comment>
<comment type="cofactor">
    <cofactor evidence="1">
        <name>Mg(2+)</name>
        <dbReference type="ChEBI" id="CHEBI:18420"/>
    </cofactor>
    <text evidence="1">Binds 1 Mg(2+) ion per subunit.</text>
</comment>
<comment type="subunit">
    <text evidence="1">Homodimer.</text>
</comment>
<comment type="similarity">
    <text evidence="1">Belongs to the HAD-like hydrolase superfamily. PhnX family.</text>
</comment>
<accession>C0Q7V6</accession>
<dbReference type="EC" id="3.11.1.1" evidence="1"/>
<dbReference type="EMBL" id="CP000857">
    <property type="protein sequence ID" value="ACN44626.1"/>
    <property type="molecule type" value="Genomic_DNA"/>
</dbReference>
<dbReference type="SMR" id="C0Q7V6"/>
<dbReference type="KEGG" id="sei:SPC_0444"/>
<dbReference type="HOGENOM" id="CLU_045011_12_0_6"/>
<dbReference type="Proteomes" id="UP000001599">
    <property type="component" value="Chromosome"/>
</dbReference>
<dbReference type="GO" id="GO:0005829">
    <property type="term" value="C:cytosol"/>
    <property type="evidence" value="ECO:0007669"/>
    <property type="project" value="TreeGrafter"/>
</dbReference>
<dbReference type="GO" id="GO:0000287">
    <property type="term" value="F:magnesium ion binding"/>
    <property type="evidence" value="ECO:0007669"/>
    <property type="project" value="UniProtKB-UniRule"/>
</dbReference>
<dbReference type="GO" id="GO:0008967">
    <property type="term" value="F:phosphoglycolate phosphatase activity"/>
    <property type="evidence" value="ECO:0007669"/>
    <property type="project" value="TreeGrafter"/>
</dbReference>
<dbReference type="GO" id="GO:0050194">
    <property type="term" value="F:phosphonoacetaldehyde hydrolase activity"/>
    <property type="evidence" value="ECO:0007669"/>
    <property type="project" value="UniProtKB-UniRule"/>
</dbReference>
<dbReference type="GO" id="GO:0006281">
    <property type="term" value="P:DNA repair"/>
    <property type="evidence" value="ECO:0007669"/>
    <property type="project" value="TreeGrafter"/>
</dbReference>
<dbReference type="GO" id="GO:0019700">
    <property type="term" value="P:organic phosphonate catabolic process"/>
    <property type="evidence" value="ECO:0007669"/>
    <property type="project" value="InterPro"/>
</dbReference>
<dbReference type="CDD" id="cd02586">
    <property type="entry name" value="HAD_PHN"/>
    <property type="match status" value="1"/>
</dbReference>
<dbReference type="FunFam" id="1.10.150.240:FF:000006">
    <property type="entry name" value="Phosphonoacetaldehyde hydrolase"/>
    <property type="match status" value="1"/>
</dbReference>
<dbReference type="FunFam" id="3.40.50.1000:FF:000072">
    <property type="entry name" value="Phosphonoacetaldehyde hydrolase"/>
    <property type="match status" value="1"/>
</dbReference>
<dbReference type="Gene3D" id="3.40.50.1000">
    <property type="entry name" value="HAD superfamily/HAD-like"/>
    <property type="match status" value="1"/>
</dbReference>
<dbReference type="Gene3D" id="1.10.150.240">
    <property type="entry name" value="Putative phosphatase, domain 2"/>
    <property type="match status" value="1"/>
</dbReference>
<dbReference type="HAMAP" id="MF_01375">
    <property type="entry name" value="PhnX"/>
    <property type="match status" value="1"/>
</dbReference>
<dbReference type="InterPro" id="IPR050155">
    <property type="entry name" value="HAD-like_hydrolase_sf"/>
</dbReference>
<dbReference type="InterPro" id="IPR036412">
    <property type="entry name" value="HAD-like_sf"/>
</dbReference>
<dbReference type="InterPro" id="IPR006439">
    <property type="entry name" value="HAD-SF_hydro_IA"/>
</dbReference>
<dbReference type="InterPro" id="IPR023214">
    <property type="entry name" value="HAD_sf"/>
</dbReference>
<dbReference type="InterPro" id="IPR023198">
    <property type="entry name" value="PGP-like_dom2"/>
</dbReference>
<dbReference type="InterPro" id="IPR006323">
    <property type="entry name" value="Phosphonoacetald_hydro"/>
</dbReference>
<dbReference type="NCBIfam" id="TIGR01509">
    <property type="entry name" value="HAD-SF-IA-v3"/>
    <property type="match status" value="1"/>
</dbReference>
<dbReference type="NCBIfam" id="TIGR01422">
    <property type="entry name" value="phosphonatase"/>
    <property type="match status" value="1"/>
</dbReference>
<dbReference type="PANTHER" id="PTHR43434">
    <property type="entry name" value="PHOSPHOGLYCOLATE PHOSPHATASE"/>
    <property type="match status" value="1"/>
</dbReference>
<dbReference type="PANTHER" id="PTHR43434:SF19">
    <property type="entry name" value="PHOSPHONOACETALDEHYDE HYDROLASE"/>
    <property type="match status" value="1"/>
</dbReference>
<dbReference type="Pfam" id="PF00702">
    <property type="entry name" value="Hydrolase"/>
    <property type="match status" value="1"/>
</dbReference>
<dbReference type="SFLD" id="SFLDG01129">
    <property type="entry name" value="C1.5:_HAD__Beta-PGM__Phosphata"/>
    <property type="match status" value="1"/>
</dbReference>
<dbReference type="SFLD" id="SFLDF00038">
    <property type="entry name" value="phosphonoacetaldehyde_hydrolas"/>
    <property type="match status" value="1"/>
</dbReference>
<dbReference type="SUPFAM" id="SSF56784">
    <property type="entry name" value="HAD-like"/>
    <property type="match status" value="1"/>
</dbReference>
<sequence>MMNRIHAVILDWAGTTVDFGSFAPTQIFVEAFRQAFDVEITLAEARVPMGLGKWQHIEALGKLPAVDARWQAKFSRSMSAADIDAIYAAFMPLQIAKVVDFSSPIAGVIDTIAALRAEGIKIGSCSGYPRAVMERLVPAAAGHGYCPDHWVATDDLAAGGRPGPWMALQNVIALGIDAVAHCVKVDDAAPGISEGLNAGMWTVGLAVSGNEFGATWDAYQTMSKEDVAVRREHAASKLYAAGAHYVVDSLADLPEVIAHINARLAQGERP</sequence>
<reference key="1">
    <citation type="journal article" date="2009" name="PLoS ONE">
        <title>Salmonella paratyphi C: genetic divergence from Salmonella choleraesuis and pathogenic convergence with Salmonella typhi.</title>
        <authorList>
            <person name="Liu W.-Q."/>
            <person name="Feng Y."/>
            <person name="Wang Y."/>
            <person name="Zou Q.-H."/>
            <person name="Chen F."/>
            <person name="Guo J.-T."/>
            <person name="Peng Y.-H."/>
            <person name="Jin Y."/>
            <person name="Li Y.-G."/>
            <person name="Hu S.-N."/>
            <person name="Johnston R.N."/>
            <person name="Liu G.-R."/>
            <person name="Liu S.-L."/>
        </authorList>
    </citation>
    <scope>NUCLEOTIDE SEQUENCE [LARGE SCALE GENOMIC DNA]</scope>
    <source>
        <strain>RKS4594</strain>
    </source>
</reference>
<protein>
    <recommendedName>
        <fullName evidence="1">Phosphonoacetaldehyde hydrolase</fullName>
        <shortName evidence="1">Phosphonatase</shortName>
        <ecNumber evidence="1">3.11.1.1</ecNumber>
    </recommendedName>
    <alternativeName>
        <fullName evidence="1">Phosphonoacetaldehyde phosphonohydrolase</fullName>
    </alternativeName>
</protein>
<proteinExistence type="inferred from homology"/>
<gene>
    <name evidence="1" type="primary">phnX</name>
    <name type="ordered locus">SPC_0444</name>
</gene>
<feature type="chain" id="PRO_1000184188" description="Phosphonoacetaldehyde hydrolase">
    <location>
        <begin position="1"/>
        <end position="270"/>
    </location>
</feature>
<feature type="active site" description="Nucleophile" evidence="1">
    <location>
        <position position="11"/>
    </location>
</feature>
<feature type="active site" description="Schiff-base intermediate with substrate" evidence="1">
    <location>
        <position position="53"/>
    </location>
</feature>
<feature type="binding site" evidence="1">
    <location>
        <position position="11"/>
    </location>
    <ligand>
        <name>Mg(2+)</name>
        <dbReference type="ChEBI" id="CHEBI:18420"/>
    </ligand>
</feature>
<feature type="binding site" evidence="1">
    <location>
        <position position="13"/>
    </location>
    <ligand>
        <name>Mg(2+)</name>
        <dbReference type="ChEBI" id="CHEBI:18420"/>
    </ligand>
</feature>
<feature type="binding site" evidence="1">
    <location>
        <position position="187"/>
    </location>
    <ligand>
        <name>Mg(2+)</name>
        <dbReference type="ChEBI" id="CHEBI:18420"/>
    </ligand>
</feature>
<keyword id="KW-0378">Hydrolase</keyword>
<keyword id="KW-0460">Magnesium</keyword>
<keyword id="KW-0479">Metal-binding</keyword>
<keyword id="KW-0704">Schiff base</keyword>
<evidence type="ECO:0000255" key="1">
    <source>
        <dbReference type="HAMAP-Rule" id="MF_01375"/>
    </source>
</evidence>
<organism>
    <name type="scientific">Salmonella paratyphi C (strain RKS4594)</name>
    <dbReference type="NCBI Taxonomy" id="476213"/>
    <lineage>
        <taxon>Bacteria</taxon>
        <taxon>Pseudomonadati</taxon>
        <taxon>Pseudomonadota</taxon>
        <taxon>Gammaproteobacteria</taxon>
        <taxon>Enterobacterales</taxon>
        <taxon>Enterobacteriaceae</taxon>
        <taxon>Salmonella</taxon>
    </lineage>
</organism>